<reference key="1">
    <citation type="journal article" date="1995" name="Science">
        <title>Whole-genome random sequencing and assembly of Haemophilus influenzae Rd.</title>
        <authorList>
            <person name="Fleischmann R.D."/>
            <person name="Adams M.D."/>
            <person name="White O."/>
            <person name="Clayton R.A."/>
            <person name="Kirkness E.F."/>
            <person name="Kerlavage A.R."/>
            <person name="Bult C.J."/>
            <person name="Tomb J.-F."/>
            <person name="Dougherty B.A."/>
            <person name="Merrick J.M."/>
            <person name="McKenney K."/>
            <person name="Sutton G.G."/>
            <person name="FitzHugh W."/>
            <person name="Fields C.A."/>
            <person name="Gocayne J.D."/>
            <person name="Scott J.D."/>
            <person name="Shirley R."/>
            <person name="Liu L.-I."/>
            <person name="Glodek A."/>
            <person name="Kelley J.M."/>
            <person name="Weidman J.F."/>
            <person name="Phillips C.A."/>
            <person name="Spriggs T."/>
            <person name="Hedblom E."/>
            <person name="Cotton M.D."/>
            <person name="Utterback T.R."/>
            <person name="Hanna M.C."/>
            <person name="Nguyen D.T."/>
            <person name="Saudek D.M."/>
            <person name="Brandon R.C."/>
            <person name="Fine L.D."/>
            <person name="Fritchman J.L."/>
            <person name="Fuhrmann J.L."/>
            <person name="Geoghagen N.S.M."/>
            <person name="Gnehm C.L."/>
            <person name="McDonald L.A."/>
            <person name="Small K.V."/>
            <person name="Fraser C.M."/>
            <person name="Smith H.O."/>
            <person name="Venter J.C."/>
        </authorList>
    </citation>
    <scope>NUCLEOTIDE SEQUENCE [LARGE SCALE GENOMIC DNA]</scope>
    <source>
        <strain>ATCC 51907 / DSM 11121 / KW20 / Rd</strain>
    </source>
</reference>
<gene>
    <name type="ordered locus">HI_0077</name>
</gene>
<organism>
    <name type="scientific">Haemophilus influenzae (strain ATCC 51907 / DSM 11121 / KW20 / Rd)</name>
    <dbReference type="NCBI Taxonomy" id="71421"/>
    <lineage>
        <taxon>Bacteria</taxon>
        <taxon>Pseudomonadati</taxon>
        <taxon>Pseudomonadota</taxon>
        <taxon>Gammaproteobacteria</taxon>
        <taxon>Pasteurellales</taxon>
        <taxon>Pasteurellaceae</taxon>
        <taxon>Haemophilus</taxon>
    </lineage>
</organism>
<accession>P43935</accession>
<keyword id="KW-1185">Reference proteome</keyword>
<protein>
    <recommendedName>
        <fullName>Uncharacterized protein HI_0077</fullName>
    </recommendedName>
</protein>
<feature type="chain" id="PRO_0000077883" description="Uncharacterized protein HI_0077">
    <location>
        <begin position="1"/>
        <end position="288"/>
    </location>
</feature>
<proteinExistence type="predicted"/>
<dbReference type="EMBL" id="L42023">
    <property type="protein sequence ID" value="AAC21760.1"/>
    <property type="molecule type" value="Genomic_DNA"/>
</dbReference>
<dbReference type="PIR" id="G64000">
    <property type="entry name" value="G64000"/>
</dbReference>
<dbReference type="RefSeq" id="NP_438250.1">
    <property type="nucleotide sequence ID" value="NC_000907.1"/>
</dbReference>
<dbReference type="SMR" id="P43935"/>
<dbReference type="STRING" id="71421.HI_0077"/>
<dbReference type="EnsemblBacteria" id="AAC21760">
    <property type="protein sequence ID" value="AAC21760"/>
    <property type="gene ID" value="HI_0077"/>
</dbReference>
<dbReference type="KEGG" id="hin:HI_0077"/>
<dbReference type="PATRIC" id="fig|71421.8.peg.78"/>
<dbReference type="eggNOG" id="COG2833">
    <property type="taxonomic scope" value="Bacteria"/>
</dbReference>
<dbReference type="HOGENOM" id="CLU_035354_0_1_6"/>
<dbReference type="OrthoDB" id="9778629at2"/>
<dbReference type="BioCyc" id="HINF71421:G1GJ1-78-MONOMER"/>
<dbReference type="Proteomes" id="UP000000579">
    <property type="component" value="Chromosome"/>
</dbReference>
<dbReference type="CDD" id="cd00657">
    <property type="entry name" value="Ferritin_like"/>
    <property type="match status" value="1"/>
</dbReference>
<dbReference type="InterPro" id="IPR007402">
    <property type="entry name" value="DUF455"/>
</dbReference>
<dbReference type="InterPro" id="IPR009078">
    <property type="entry name" value="Ferritin-like_SF"/>
</dbReference>
<dbReference type="InterPro" id="IPR011197">
    <property type="entry name" value="UCP012318"/>
</dbReference>
<dbReference type="PANTHER" id="PTHR42782:SF4">
    <property type="entry name" value="DUF455 DOMAIN-CONTAINING PROTEIN"/>
    <property type="match status" value="1"/>
</dbReference>
<dbReference type="PANTHER" id="PTHR42782">
    <property type="entry name" value="SI:CH73-314G15.3"/>
    <property type="match status" value="1"/>
</dbReference>
<dbReference type="Pfam" id="PF04305">
    <property type="entry name" value="DUF455"/>
    <property type="match status" value="1"/>
</dbReference>
<dbReference type="PIRSF" id="PIRSF012318">
    <property type="entry name" value="UCP012318"/>
    <property type="match status" value="1"/>
</dbReference>
<dbReference type="SUPFAM" id="SSF47240">
    <property type="entry name" value="Ferritin-like"/>
    <property type="match status" value="1"/>
</dbReference>
<sequence>MTALITQFWQQVETALKTANPQEKCRLVNDLYDNLLPQIQLIKLEDFPEIVPQDNIAAFPEKPLLVAPKDVPKRSFATEEGYAATLHAIAHIEFNAINLGLDAAWRFGRNAQEELGEGLAFVKDWLRVAREESTHFSLVNEHLKTLGYQYGDFEAHAGLWEMAQATAHDIWERMALVPRVLEARGLDATPVLQEKIAQRKDFAAVNILDIILRDEIGHVYIGNHWYHALSKKRGLDAMKCFTELLHKYRIVIFKGVINTDARIQAGFTQHELDWIYEVEQTLKSYIKK</sequence>
<name>Y077_HAEIN</name>